<name>DPP5_TRIVH</name>
<gene>
    <name type="primary">DPP5</name>
    <name type="ORF">TRV_02418</name>
</gene>
<protein>
    <recommendedName>
        <fullName>Probable dipeptidyl-peptidase 5</fullName>
        <ecNumber>3.4.14.-</ecNumber>
    </recommendedName>
    <alternativeName>
        <fullName>Dipeptidyl-peptidase V</fullName>
        <shortName>DPP V</shortName>
        <shortName>DppV</shortName>
    </alternativeName>
</protein>
<organism>
    <name type="scientific">Trichophyton verrucosum (strain HKI 0517)</name>
    <dbReference type="NCBI Taxonomy" id="663202"/>
    <lineage>
        <taxon>Eukaryota</taxon>
        <taxon>Fungi</taxon>
        <taxon>Dikarya</taxon>
        <taxon>Ascomycota</taxon>
        <taxon>Pezizomycotina</taxon>
        <taxon>Eurotiomycetes</taxon>
        <taxon>Eurotiomycetidae</taxon>
        <taxon>Onygenales</taxon>
        <taxon>Arthrodermataceae</taxon>
        <taxon>Trichophyton</taxon>
    </lineage>
</organism>
<keyword id="KW-0031">Aminopeptidase</keyword>
<keyword id="KW-0325">Glycoprotein</keyword>
<keyword id="KW-0378">Hydrolase</keyword>
<keyword id="KW-0645">Protease</keyword>
<keyword id="KW-0964">Secreted</keyword>
<keyword id="KW-0720">Serine protease</keyword>
<keyword id="KW-0732">Signal</keyword>
<keyword id="KW-0843">Virulence</keyword>
<sequence>MAAAKWLIASLAFASSGLAFTPEDFISAPRRGEAIPDPKGELAVFHVSKYNFDKKDRPSGWNLLNLKNGDISVLTTDSDVSEITWLGDGTKVVYVNGTDSVKGGVGIWISDAKNFGNAYKAGSVNGAFSGLKLAKSGDKINFVGYGQSTTKGDLYNEAAAKEAVSSARIYDSLFVRHWDTYVGTQFNAVFSGALTKNGDKYSFDGKLKNLVQPVKYAESPYPPFGGSGDYDLSSDGKTVAFMSKAPELPKANLTTSYIFLVPHDGSRVAEPINKRNGPRTPQGIEGASSSPVFSPDGKRIAYLQMATKNYESDRRVIHIAEVGSNKPVQRIASNWDRSPEAVKWSSDGRTLYVTAEDHATGKLFTLPADARDNHKPEVVKHDGSVSSFYFVGSSKSVLISGNSLWSNALFQVATPGRPNRKLFYANEHDPELKGLGPNDIEPLWVDGARTKIHSWIVKPTGFDKNKVYPLAFLIHGGPQGSWGDSWSTRWNPRVWADQGYVVVAPNPTGSTGFGQKLTDDITNDWGGAPYKDLVKIWEHVHNNIKYIDTDNGIAAGASFGGFMVNWIQGQDLGRKFKALVSHDGTFVGSSKIGTDELFFIEHDFNGTFFEARQNYDRWDCSKPELVAKWSTPQLVVHNDFDFRLSVAEGVGLFNVLQEKGVPSRFLNFPDETHWVTKPENSLVWHQQVLGWVNKWSGINKSNPKSIKLSDCPIEVVDHEAHSYFDY</sequence>
<reference key="1">
    <citation type="journal article" date="2011" name="Genome Biol.">
        <title>Comparative and functional genomics provide insights into the pathogenicity of dermatophytic fungi.</title>
        <authorList>
            <person name="Burmester A."/>
            <person name="Shelest E."/>
            <person name="Gloeckner G."/>
            <person name="Heddergott C."/>
            <person name="Schindler S."/>
            <person name="Staib P."/>
            <person name="Heidel A."/>
            <person name="Felder M."/>
            <person name="Petzold A."/>
            <person name="Szafranski K."/>
            <person name="Feuermann M."/>
            <person name="Pedruzzi I."/>
            <person name="Priebe S."/>
            <person name="Groth M."/>
            <person name="Winkler R."/>
            <person name="Li W."/>
            <person name="Kniemeyer O."/>
            <person name="Schroeckh V."/>
            <person name="Hertweck C."/>
            <person name="Hube B."/>
            <person name="White T.C."/>
            <person name="Platzer M."/>
            <person name="Guthke R."/>
            <person name="Heitman J."/>
            <person name="Woestemeyer J."/>
            <person name="Zipfel P.F."/>
            <person name="Monod M."/>
            <person name="Brakhage A.A."/>
        </authorList>
    </citation>
    <scope>NUCLEOTIDE SEQUENCE [LARGE SCALE GENOMIC DNA]</scope>
    <source>
        <strain>HKI 0517</strain>
    </source>
</reference>
<accession>D4D5P5</accession>
<evidence type="ECO:0000250" key="1"/>
<evidence type="ECO:0000255" key="2"/>
<evidence type="ECO:0000256" key="3">
    <source>
        <dbReference type="SAM" id="MobiDB-lite"/>
    </source>
</evidence>
<evidence type="ECO:0000305" key="4"/>
<feature type="signal peptide" evidence="2">
    <location>
        <begin position="1"/>
        <end position="19"/>
    </location>
</feature>
<feature type="chain" id="PRO_0000397822" description="Probable dipeptidyl-peptidase 5">
    <location>
        <begin position="20"/>
        <end position="726"/>
    </location>
</feature>
<feature type="region of interest" description="Disordered" evidence="3">
    <location>
        <begin position="269"/>
        <end position="291"/>
    </location>
</feature>
<feature type="active site" description="Charge relay system" evidence="1">
    <location>
        <position position="558"/>
    </location>
</feature>
<feature type="active site" description="Charge relay system" evidence="1">
    <location>
        <position position="641"/>
    </location>
</feature>
<feature type="active site" description="Charge relay system" evidence="1">
    <location>
        <position position="673"/>
    </location>
</feature>
<feature type="glycosylation site" description="N-linked (GlcNAc...) asparagine" evidence="2">
    <location>
        <position position="96"/>
    </location>
</feature>
<feature type="glycosylation site" description="N-linked (GlcNAc...) asparagine" evidence="2">
    <location>
        <position position="252"/>
    </location>
</feature>
<feature type="glycosylation site" description="N-linked (GlcNAc...) asparagine" evidence="2">
    <location>
        <position position="605"/>
    </location>
</feature>
<feature type="glycosylation site" description="N-linked (GlcNAc...) asparagine" evidence="2">
    <location>
        <position position="699"/>
    </location>
</feature>
<dbReference type="EC" id="3.4.14.-"/>
<dbReference type="EMBL" id="ACYE01000126">
    <property type="protein sequence ID" value="EFE42816.1"/>
    <property type="molecule type" value="Genomic_DNA"/>
</dbReference>
<dbReference type="RefSeq" id="XP_003023434.1">
    <property type="nucleotide sequence ID" value="XM_003023388.1"/>
</dbReference>
<dbReference type="SMR" id="D4D5P5"/>
<dbReference type="ESTHER" id="artbe-DPP5">
    <property type="family name" value="Prolyl_oligopeptidase_S9"/>
</dbReference>
<dbReference type="GlyCosmos" id="D4D5P5">
    <property type="glycosylation" value="4 sites, No reported glycans"/>
</dbReference>
<dbReference type="GeneID" id="9583454"/>
<dbReference type="KEGG" id="tve:TRV_02418"/>
<dbReference type="HOGENOM" id="CLU_008615_0_1_1"/>
<dbReference type="OrthoDB" id="968at34384"/>
<dbReference type="Proteomes" id="UP000008383">
    <property type="component" value="Unassembled WGS sequence"/>
</dbReference>
<dbReference type="GO" id="GO:0005576">
    <property type="term" value="C:extracellular region"/>
    <property type="evidence" value="ECO:0007669"/>
    <property type="project" value="UniProtKB-SubCell"/>
</dbReference>
<dbReference type="GO" id="GO:0004177">
    <property type="term" value="F:aminopeptidase activity"/>
    <property type="evidence" value="ECO:0007669"/>
    <property type="project" value="UniProtKB-KW"/>
</dbReference>
<dbReference type="GO" id="GO:0004252">
    <property type="term" value="F:serine-type endopeptidase activity"/>
    <property type="evidence" value="ECO:0007669"/>
    <property type="project" value="TreeGrafter"/>
</dbReference>
<dbReference type="GO" id="GO:0006508">
    <property type="term" value="P:proteolysis"/>
    <property type="evidence" value="ECO:0007669"/>
    <property type="project" value="UniProtKB-KW"/>
</dbReference>
<dbReference type="FunFam" id="3.40.50.1820:FF:000028">
    <property type="entry name" value="S9 family peptidase"/>
    <property type="match status" value="1"/>
</dbReference>
<dbReference type="Gene3D" id="3.40.50.1820">
    <property type="entry name" value="alpha/beta hydrolase"/>
    <property type="match status" value="1"/>
</dbReference>
<dbReference type="Gene3D" id="2.120.10.30">
    <property type="entry name" value="TolB, C-terminal domain"/>
    <property type="match status" value="1"/>
</dbReference>
<dbReference type="InterPro" id="IPR011042">
    <property type="entry name" value="6-blade_b-propeller_TolB-like"/>
</dbReference>
<dbReference type="InterPro" id="IPR029058">
    <property type="entry name" value="AB_hydrolase_fold"/>
</dbReference>
<dbReference type="InterPro" id="IPR011659">
    <property type="entry name" value="PD40"/>
</dbReference>
<dbReference type="InterPro" id="IPR001375">
    <property type="entry name" value="Peptidase_S9_cat"/>
</dbReference>
<dbReference type="PANTHER" id="PTHR42776:SF11">
    <property type="entry name" value="DIPEPTIDYL-PEPTIDASE 5-RELATED"/>
    <property type="match status" value="1"/>
</dbReference>
<dbReference type="PANTHER" id="PTHR42776">
    <property type="entry name" value="SERINE PEPTIDASE S9 FAMILY MEMBER"/>
    <property type="match status" value="1"/>
</dbReference>
<dbReference type="Pfam" id="PF07676">
    <property type="entry name" value="PD40"/>
    <property type="match status" value="1"/>
</dbReference>
<dbReference type="Pfam" id="PF00326">
    <property type="entry name" value="Peptidase_S9"/>
    <property type="match status" value="1"/>
</dbReference>
<dbReference type="SUPFAM" id="SSF53474">
    <property type="entry name" value="alpha/beta-Hydrolases"/>
    <property type="match status" value="1"/>
</dbReference>
<dbReference type="SUPFAM" id="SSF82171">
    <property type="entry name" value="DPP6 N-terminal domain-like"/>
    <property type="match status" value="1"/>
</dbReference>
<comment type="function">
    <text evidence="1">Extracellular dipeptidyl-peptidase which removes N-terminal dipeptides sequentially from polypeptides having unsubstituted N-termini. Contributes to pathogenicity (By similarity).</text>
</comment>
<comment type="subcellular location">
    <subcellularLocation>
        <location evidence="1">Secreted</location>
    </subcellularLocation>
</comment>
<comment type="similarity">
    <text evidence="4">Belongs to the peptidase S9C family.</text>
</comment>
<proteinExistence type="inferred from homology"/>